<gene>
    <name evidence="1" type="primary">recA</name>
    <name type="ordered locus">Mfl206</name>
</gene>
<accession>Q6F1R0</accession>
<name>RECA_MESFL</name>
<reference key="1">
    <citation type="submission" date="2004-06" db="EMBL/GenBank/DDBJ databases">
        <authorList>
            <person name="Birren B.W."/>
            <person name="Stange-Thomann N."/>
            <person name="Hafez N."/>
            <person name="DeCaprio D."/>
            <person name="Fisher S."/>
            <person name="Butler J."/>
            <person name="Elkins T."/>
            <person name="Kodira C.D."/>
            <person name="Major J."/>
            <person name="Wang S."/>
            <person name="Nicol R."/>
            <person name="Nusbaum C."/>
        </authorList>
    </citation>
    <scope>NUCLEOTIDE SEQUENCE [LARGE SCALE GENOMIC DNA]</scope>
    <source>
        <strain>ATCC 33453 / NBRC 100688 / NCTC 11704 / L1</strain>
    </source>
</reference>
<feature type="chain" id="PRO_0000122755" description="Protein RecA">
    <location>
        <begin position="1"/>
        <end position="333"/>
    </location>
</feature>
<feature type="binding site" evidence="1">
    <location>
        <begin position="69"/>
        <end position="76"/>
    </location>
    <ligand>
        <name>ATP</name>
        <dbReference type="ChEBI" id="CHEBI:30616"/>
    </ligand>
</feature>
<organism>
    <name type="scientific">Mesoplasma florum (strain ATCC 33453 / NBRC 100688 / NCTC 11704 / L1)</name>
    <name type="common">Acholeplasma florum</name>
    <dbReference type="NCBI Taxonomy" id="265311"/>
    <lineage>
        <taxon>Bacteria</taxon>
        <taxon>Bacillati</taxon>
        <taxon>Mycoplasmatota</taxon>
        <taxon>Mollicutes</taxon>
        <taxon>Entomoplasmatales</taxon>
        <taxon>Entomoplasmataceae</taxon>
        <taxon>Mesoplasma</taxon>
    </lineage>
</organism>
<proteinExistence type="inferred from homology"/>
<comment type="function">
    <text evidence="1">Can catalyze the hydrolysis of ATP in the presence of single-stranded DNA, the ATP-dependent uptake of single-stranded DNA by duplex DNA, and the ATP-dependent hybridization of homologous single-stranded DNAs. It interacts with LexA causing its activation and leading to its autocatalytic cleavage.</text>
</comment>
<comment type="subcellular location">
    <subcellularLocation>
        <location evidence="1">Cytoplasm</location>
    </subcellularLocation>
</comment>
<comment type="similarity">
    <text evidence="1">Belongs to the RecA family.</text>
</comment>
<comment type="sequence caution" evidence="2">
    <conflict type="erroneous initiation">
        <sequence resource="EMBL-CDS" id="AAT75563"/>
    </conflict>
</comment>
<evidence type="ECO:0000255" key="1">
    <source>
        <dbReference type="HAMAP-Rule" id="MF_00268"/>
    </source>
</evidence>
<evidence type="ECO:0000305" key="2"/>
<keyword id="KW-0067">ATP-binding</keyword>
<keyword id="KW-0963">Cytoplasm</keyword>
<keyword id="KW-0227">DNA damage</keyword>
<keyword id="KW-0233">DNA recombination</keyword>
<keyword id="KW-0234">DNA repair</keyword>
<keyword id="KW-0238">DNA-binding</keyword>
<keyword id="KW-0547">Nucleotide-binding</keyword>
<keyword id="KW-1185">Reference proteome</keyword>
<keyword id="KW-0742">SOS response</keyword>
<protein>
    <recommendedName>
        <fullName evidence="1">Protein RecA</fullName>
    </recommendedName>
    <alternativeName>
        <fullName evidence="1">Recombinase A</fullName>
    </alternativeName>
</protein>
<sequence>MSSKNEIWKNEALISALKTIEKNYGKEALVVYNEGDDIDHDVISSGSFLIDQAIGIGGYPKGRVVEIFGPESSGKTTLALHAIAEAQKQGEIAAFIDAEHSLDLNYAKKIGVDINSLLVSQPSYGEEALDILETLVKSNSISLIVVDSVAALVPKTELEGEMSDQSIGLQARMMSKALRKLNGVISKSKTTVIFINQLREKIGIMFGNPETTTGGRALKFFSTLRIEVRKGESLIENGIVVANKVKVKVVKNKVAVPFKQTLITIGYDKGIERINEIIELATLYNILDKSGVWYSYEKEKIGQGKNAVKEWLNKNPDKLSKIEFELKEFIEKS</sequence>
<dbReference type="EMBL" id="AE017263">
    <property type="protein sequence ID" value="AAT75563.1"/>
    <property type="status" value="ALT_INIT"/>
    <property type="molecule type" value="Genomic_DNA"/>
</dbReference>
<dbReference type="RefSeq" id="WP_011183103.1">
    <property type="nucleotide sequence ID" value="NC_006055.1"/>
</dbReference>
<dbReference type="RefSeq" id="YP_053447.1">
    <property type="nucleotide sequence ID" value="NC_006055.1"/>
</dbReference>
<dbReference type="SMR" id="Q6F1R0"/>
<dbReference type="STRING" id="265311.Mfl206"/>
<dbReference type="PaxDb" id="265311-Mfl206"/>
<dbReference type="EnsemblBacteria" id="AAT75563">
    <property type="protein sequence ID" value="AAT75563"/>
    <property type="gene ID" value="Mfl206"/>
</dbReference>
<dbReference type="GeneID" id="2898126"/>
<dbReference type="KEGG" id="mfl:Mfl206"/>
<dbReference type="PATRIC" id="fig|265311.5.peg.207"/>
<dbReference type="eggNOG" id="COG0468">
    <property type="taxonomic scope" value="Bacteria"/>
</dbReference>
<dbReference type="HOGENOM" id="CLU_040469_3_2_14"/>
<dbReference type="OrthoDB" id="9776733at2"/>
<dbReference type="Proteomes" id="UP000006647">
    <property type="component" value="Chromosome"/>
</dbReference>
<dbReference type="GO" id="GO:0005829">
    <property type="term" value="C:cytosol"/>
    <property type="evidence" value="ECO:0007669"/>
    <property type="project" value="TreeGrafter"/>
</dbReference>
<dbReference type="GO" id="GO:0005524">
    <property type="term" value="F:ATP binding"/>
    <property type="evidence" value="ECO:0007669"/>
    <property type="project" value="UniProtKB-UniRule"/>
</dbReference>
<dbReference type="GO" id="GO:0016887">
    <property type="term" value="F:ATP hydrolysis activity"/>
    <property type="evidence" value="ECO:0007669"/>
    <property type="project" value="InterPro"/>
</dbReference>
<dbReference type="GO" id="GO:0140664">
    <property type="term" value="F:ATP-dependent DNA damage sensor activity"/>
    <property type="evidence" value="ECO:0007669"/>
    <property type="project" value="InterPro"/>
</dbReference>
<dbReference type="GO" id="GO:0003684">
    <property type="term" value="F:damaged DNA binding"/>
    <property type="evidence" value="ECO:0007669"/>
    <property type="project" value="UniProtKB-UniRule"/>
</dbReference>
<dbReference type="GO" id="GO:0003697">
    <property type="term" value="F:single-stranded DNA binding"/>
    <property type="evidence" value="ECO:0007669"/>
    <property type="project" value="UniProtKB-UniRule"/>
</dbReference>
<dbReference type="GO" id="GO:0006310">
    <property type="term" value="P:DNA recombination"/>
    <property type="evidence" value="ECO:0007669"/>
    <property type="project" value="UniProtKB-UniRule"/>
</dbReference>
<dbReference type="GO" id="GO:0006281">
    <property type="term" value="P:DNA repair"/>
    <property type="evidence" value="ECO:0007669"/>
    <property type="project" value="UniProtKB-UniRule"/>
</dbReference>
<dbReference type="GO" id="GO:0009432">
    <property type="term" value="P:SOS response"/>
    <property type="evidence" value="ECO:0007669"/>
    <property type="project" value="UniProtKB-UniRule"/>
</dbReference>
<dbReference type="CDD" id="cd00983">
    <property type="entry name" value="RecA"/>
    <property type="match status" value="1"/>
</dbReference>
<dbReference type="FunFam" id="3.40.50.300:FF:000087">
    <property type="entry name" value="Recombinase RecA"/>
    <property type="match status" value="1"/>
</dbReference>
<dbReference type="Gene3D" id="3.40.50.300">
    <property type="entry name" value="P-loop containing nucleotide triphosphate hydrolases"/>
    <property type="match status" value="1"/>
</dbReference>
<dbReference type="HAMAP" id="MF_00268">
    <property type="entry name" value="RecA"/>
    <property type="match status" value="1"/>
</dbReference>
<dbReference type="InterPro" id="IPR003593">
    <property type="entry name" value="AAA+_ATPase"/>
</dbReference>
<dbReference type="InterPro" id="IPR013765">
    <property type="entry name" value="DNA_recomb/repair_RecA"/>
</dbReference>
<dbReference type="InterPro" id="IPR020584">
    <property type="entry name" value="DNA_recomb/repair_RecA_CS"/>
</dbReference>
<dbReference type="InterPro" id="IPR027417">
    <property type="entry name" value="P-loop_NTPase"/>
</dbReference>
<dbReference type="InterPro" id="IPR049261">
    <property type="entry name" value="RecA-like_C"/>
</dbReference>
<dbReference type="InterPro" id="IPR049428">
    <property type="entry name" value="RecA-like_N"/>
</dbReference>
<dbReference type="InterPro" id="IPR020588">
    <property type="entry name" value="RecA_ATP-bd"/>
</dbReference>
<dbReference type="InterPro" id="IPR023400">
    <property type="entry name" value="RecA_C_sf"/>
</dbReference>
<dbReference type="InterPro" id="IPR020587">
    <property type="entry name" value="RecA_monomer-monomer_interface"/>
</dbReference>
<dbReference type="NCBIfam" id="TIGR02012">
    <property type="entry name" value="tigrfam_recA"/>
    <property type="match status" value="1"/>
</dbReference>
<dbReference type="PANTHER" id="PTHR45900:SF1">
    <property type="entry name" value="MITOCHONDRIAL DNA REPAIR PROTEIN RECA HOMOLOG-RELATED"/>
    <property type="match status" value="1"/>
</dbReference>
<dbReference type="PANTHER" id="PTHR45900">
    <property type="entry name" value="RECA"/>
    <property type="match status" value="1"/>
</dbReference>
<dbReference type="Pfam" id="PF00154">
    <property type="entry name" value="RecA"/>
    <property type="match status" value="1"/>
</dbReference>
<dbReference type="Pfam" id="PF21096">
    <property type="entry name" value="RecA_C"/>
    <property type="match status" value="1"/>
</dbReference>
<dbReference type="PRINTS" id="PR00142">
    <property type="entry name" value="RECA"/>
</dbReference>
<dbReference type="SMART" id="SM00382">
    <property type="entry name" value="AAA"/>
    <property type="match status" value="1"/>
</dbReference>
<dbReference type="SUPFAM" id="SSF52540">
    <property type="entry name" value="P-loop containing nucleoside triphosphate hydrolases"/>
    <property type="match status" value="1"/>
</dbReference>
<dbReference type="SUPFAM" id="SSF54752">
    <property type="entry name" value="RecA protein, C-terminal domain"/>
    <property type="match status" value="1"/>
</dbReference>
<dbReference type="PROSITE" id="PS00321">
    <property type="entry name" value="RECA_1"/>
    <property type="match status" value="1"/>
</dbReference>
<dbReference type="PROSITE" id="PS50162">
    <property type="entry name" value="RECA_2"/>
    <property type="match status" value="1"/>
</dbReference>
<dbReference type="PROSITE" id="PS50163">
    <property type="entry name" value="RECA_3"/>
    <property type="match status" value="1"/>
</dbReference>